<comment type="function">
    <text evidence="1 3">Dermonecrotic toxins cleave the phosphodiester linkage between the phosphate and headgroup of certain phospholipids (sphingolipid and lysolipid substrates), forming an alcohol (often choline) and a cyclic phosphate (By similarity). This toxin acts on sphingomyelin (SM) (By similarity). It may also act on ceramide phosphoethanolamine (CPE), lysophosphatidylcholine (LPC) and lysophosphatidylethanolamine (LPE), but not on lysophosphatidylserine (LPS), and lysophosphatidylglycerol (LPG) (By similarity). It acts by transphosphatidylation, releasing exclusively cyclic phosphate products as second products (By similarity). Induces dermonecrosis, hemolysis, increased vascular permeability, edema, inflammatory response, and platelet aggregation (By similarity).</text>
</comment>
<comment type="catalytic activity">
    <reaction evidence="1">
        <text>an N-(acyl)-sphingosylphosphocholine = an N-(acyl)-sphingosyl-1,3-cyclic phosphate + choline</text>
        <dbReference type="Rhea" id="RHEA:60652"/>
        <dbReference type="ChEBI" id="CHEBI:15354"/>
        <dbReference type="ChEBI" id="CHEBI:64583"/>
        <dbReference type="ChEBI" id="CHEBI:143892"/>
    </reaction>
</comment>
<comment type="catalytic activity">
    <reaction evidence="1">
        <text>an N-(acyl)-sphingosylphosphoethanolamine = an N-(acyl)-sphingosyl-1,3-cyclic phosphate + ethanolamine</text>
        <dbReference type="Rhea" id="RHEA:60648"/>
        <dbReference type="ChEBI" id="CHEBI:57603"/>
        <dbReference type="ChEBI" id="CHEBI:143891"/>
        <dbReference type="ChEBI" id="CHEBI:143892"/>
    </reaction>
</comment>
<comment type="catalytic activity">
    <reaction evidence="1">
        <text>a 1-acyl-sn-glycero-3-phosphocholine = a 1-acyl-sn-glycero-2,3-cyclic phosphate + choline</text>
        <dbReference type="Rhea" id="RHEA:60700"/>
        <dbReference type="ChEBI" id="CHEBI:15354"/>
        <dbReference type="ChEBI" id="CHEBI:58168"/>
        <dbReference type="ChEBI" id="CHEBI:143947"/>
    </reaction>
</comment>
<comment type="catalytic activity">
    <reaction evidence="1">
        <text>a 1-acyl-sn-glycero-3-phosphoethanolamine = a 1-acyl-sn-glycero-2,3-cyclic phosphate + ethanolamine</text>
        <dbReference type="Rhea" id="RHEA:60704"/>
        <dbReference type="ChEBI" id="CHEBI:57603"/>
        <dbReference type="ChEBI" id="CHEBI:64381"/>
        <dbReference type="ChEBI" id="CHEBI:143947"/>
    </reaction>
</comment>
<comment type="cofactor">
    <cofactor evidence="5">
        <name>Mg(2+)</name>
        <dbReference type="ChEBI" id="CHEBI:18420"/>
    </cofactor>
    <text evidence="5">Binds 1 Mg(2+) ion per subunit.</text>
</comment>
<comment type="subcellular location">
    <subcellularLocation>
        <location evidence="8">Secreted</location>
    </subcellularLocation>
</comment>
<comment type="tissue specificity">
    <text evidence="8">Expressed by the venom gland.</text>
</comment>
<comment type="similarity">
    <text evidence="7">Belongs to the arthropod phospholipase D family. Class II subfamily.</text>
</comment>
<comment type="caution">
    <text evidence="1 2 4">The most common activity assay for dermonecrotic toxins detects enzymatic activity by monitoring choline release from substrate. Liberation of choline from sphingomyelin (SM) or lysophosphatidylcholine (LPC) is commonly assumed to result from substrate hydrolysis, giving either ceramide-1-phosphate (C1P) or lysophosphatidic acid (LPA), respectively, as a second product. However, two studies from Lajoie and colleagues (2013 and 2015) report the observation of exclusive formation of cyclic phosphate products as second products, resulting from intramolecular transphosphatidylation. Cyclic phosphates have vastly different biological properties from their monoester counterparts, and they may be relevant to the pathology of brown spider envenomation.</text>
</comment>
<sequence>AGNRRPIWIMGHMVNAIGQIDEFVNLGANSIETDVSFDDNANPEYTYHGIPCDCGRNCKKYENFNDFLKGLRSATTPGNSKYQEKLVLVVFDLKTGSLYDNQANDAGKKLAKNLLQHYWNNGNNGGRAYIVLSIPDLNHYPLIKGFKDQLTKDGHPELMDKVGHDFSGNDDIGDVGKAYKKAGITGHIWQSDGITNCLPRGLSRVNAAVANRDSANGFINKVYYWTVDKRSTTRDALDAGVDGIMTNYPDVITDVLNEAAYKKKFRVATYDDNPWVTFKK</sequence>
<dbReference type="EC" id="4.6.1.-" evidence="4"/>
<dbReference type="EMBL" id="AY929305">
    <property type="protein sequence ID" value="AAX78234.1"/>
    <property type="molecule type" value="Genomic_DNA"/>
</dbReference>
<dbReference type="SMR" id="Q56JA9"/>
<dbReference type="ArachnoServer" id="AS000134">
    <property type="toxin name" value="Sphingomyelinase D (LsSicTox-alphaIA1)"/>
</dbReference>
<dbReference type="GO" id="GO:0005576">
    <property type="term" value="C:extracellular region"/>
    <property type="evidence" value="ECO:0007669"/>
    <property type="project" value="UniProtKB-SubCell"/>
</dbReference>
<dbReference type="GO" id="GO:0016829">
    <property type="term" value="F:lyase activity"/>
    <property type="evidence" value="ECO:0007669"/>
    <property type="project" value="UniProtKB-KW"/>
</dbReference>
<dbReference type="GO" id="GO:0046872">
    <property type="term" value="F:metal ion binding"/>
    <property type="evidence" value="ECO:0007669"/>
    <property type="project" value="UniProtKB-KW"/>
</dbReference>
<dbReference type="GO" id="GO:0008081">
    <property type="term" value="F:phosphoric diester hydrolase activity"/>
    <property type="evidence" value="ECO:0007669"/>
    <property type="project" value="InterPro"/>
</dbReference>
<dbReference type="GO" id="GO:0090729">
    <property type="term" value="F:toxin activity"/>
    <property type="evidence" value="ECO:0007669"/>
    <property type="project" value="UniProtKB-KW"/>
</dbReference>
<dbReference type="GO" id="GO:0031640">
    <property type="term" value="P:killing of cells of another organism"/>
    <property type="evidence" value="ECO:0007669"/>
    <property type="project" value="UniProtKB-KW"/>
</dbReference>
<dbReference type="GO" id="GO:0016042">
    <property type="term" value="P:lipid catabolic process"/>
    <property type="evidence" value="ECO:0007669"/>
    <property type="project" value="UniProtKB-KW"/>
</dbReference>
<dbReference type="CDD" id="cd08576">
    <property type="entry name" value="GDPD_like_SMaseD_PLD"/>
    <property type="match status" value="1"/>
</dbReference>
<dbReference type="Gene3D" id="3.20.20.190">
    <property type="entry name" value="Phosphatidylinositol (PI) phosphodiesterase"/>
    <property type="match status" value="1"/>
</dbReference>
<dbReference type="InterPro" id="IPR017946">
    <property type="entry name" value="PLC-like_Pdiesterase_TIM-brl"/>
</dbReference>
<dbReference type="Pfam" id="PF13653">
    <property type="entry name" value="GDPD_2"/>
    <property type="match status" value="1"/>
</dbReference>
<dbReference type="SUPFAM" id="SSF51695">
    <property type="entry name" value="PLC-like phosphodiesterases"/>
    <property type="match status" value="1"/>
</dbReference>
<protein>
    <recommendedName>
        <fullName>Dermonecrotic toxin LsSicTox-alphaIA1</fullName>
        <ecNumber evidence="4">4.6.1.-</ecNumber>
    </recommendedName>
    <alternativeName>
        <fullName evidence="6">LsD1</fullName>
    </alternativeName>
    <alternativeName>
        <fullName>Phospholipase D</fullName>
        <shortName>PLD</shortName>
    </alternativeName>
    <alternativeName>
        <fullName>Sphingomyelin phosphodiesterase D 1</fullName>
        <shortName>SMD 1</shortName>
        <shortName>SMase D 1</shortName>
        <shortName>Sphingomyelinase D 1</shortName>
    </alternativeName>
</protein>
<organism>
    <name type="scientific">Loxosceles similis</name>
    <name type="common">Brazilian brown spider</name>
    <name type="synonym">Loxosceles surata</name>
    <dbReference type="NCBI Taxonomy" id="321804"/>
    <lineage>
        <taxon>Eukaryota</taxon>
        <taxon>Metazoa</taxon>
        <taxon>Ecdysozoa</taxon>
        <taxon>Arthropoda</taxon>
        <taxon>Chelicerata</taxon>
        <taxon>Arachnida</taxon>
        <taxon>Araneae</taxon>
        <taxon>Araneomorphae</taxon>
        <taxon>Haplogynae</taxon>
        <taxon>Scytodoidea</taxon>
        <taxon>Sicariidae</taxon>
        <taxon>Loxosceles</taxon>
    </lineage>
</organism>
<keyword id="KW-0204">Cytolysis</keyword>
<keyword id="KW-1061">Dermonecrotic toxin</keyword>
<keyword id="KW-1015">Disulfide bond</keyword>
<keyword id="KW-0354">Hemolysis</keyword>
<keyword id="KW-0442">Lipid degradation</keyword>
<keyword id="KW-0443">Lipid metabolism</keyword>
<keyword id="KW-0456">Lyase</keyword>
<keyword id="KW-0460">Magnesium</keyword>
<keyword id="KW-0479">Metal-binding</keyword>
<keyword id="KW-0964">Secreted</keyword>
<keyword id="KW-0800">Toxin</keyword>
<evidence type="ECO:0000250" key="1">
    <source>
        <dbReference type="UniProtKB" id="A0A0D4WTV1"/>
    </source>
</evidence>
<evidence type="ECO:0000250" key="2">
    <source>
        <dbReference type="UniProtKB" id="A0A0D4WV12"/>
    </source>
</evidence>
<evidence type="ECO:0000250" key="3">
    <source>
        <dbReference type="UniProtKB" id="P0CE80"/>
    </source>
</evidence>
<evidence type="ECO:0000250" key="4">
    <source>
        <dbReference type="UniProtKB" id="Q4ZFU2"/>
    </source>
</evidence>
<evidence type="ECO:0000250" key="5">
    <source>
        <dbReference type="UniProtKB" id="Q8I914"/>
    </source>
</evidence>
<evidence type="ECO:0000303" key="6">
    <source>
    </source>
</evidence>
<evidence type="ECO:0000305" key="7"/>
<evidence type="ECO:0000305" key="8">
    <source>
    </source>
</evidence>
<name>A1H_LOXSM</name>
<proteinExistence type="inferred from homology"/>
<accession>Q56JA9</accession>
<feature type="chain" id="PRO_0000279584" description="Dermonecrotic toxin LsSicTox-alphaIA1">
    <location>
        <begin position="1"/>
        <end position="280"/>
    </location>
</feature>
<feature type="active site" evidence="5">
    <location>
        <position position="12"/>
    </location>
</feature>
<feature type="active site" description="Nucleophile" evidence="5">
    <location>
        <position position="48"/>
    </location>
</feature>
<feature type="binding site" evidence="5">
    <location>
        <position position="32"/>
    </location>
    <ligand>
        <name>Mg(2+)</name>
        <dbReference type="ChEBI" id="CHEBI:18420"/>
    </ligand>
</feature>
<feature type="binding site" evidence="5">
    <location>
        <position position="34"/>
    </location>
    <ligand>
        <name>Mg(2+)</name>
        <dbReference type="ChEBI" id="CHEBI:18420"/>
    </ligand>
</feature>
<feature type="binding site" evidence="5">
    <location>
        <position position="92"/>
    </location>
    <ligand>
        <name>Mg(2+)</name>
        <dbReference type="ChEBI" id="CHEBI:18420"/>
    </ligand>
</feature>
<feature type="disulfide bond" evidence="3">
    <location>
        <begin position="52"/>
        <end position="58"/>
    </location>
</feature>
<feature type="disulfide bond" evidence="3">
    <location>
        <begin position="54"/>
        <end position="197"/>
    </location>
</feature>
<reference key="1">
    <citation type="journal article" date="2005" name="Toxicon">
        <title>Characterization of the venom from the brazilian brown spider Loxosceles similis Moenkhaus, 1898 (Araneae, Sicariidae).</title>
        <authorList>
            <person name="Silvestre F.G."/>
            <person name="de Castro C.S."/>
            <person name="de Moura J.F."/>
            <person name="Giusta M.S."/>
            <person name="De Maria M."/>
            <person name="Alvares E.S.S."/>
            <person name="Lobato F.C.F."/>
            <person name="Assis R.A."/>
            <person name="Goncalves L.A."/>
            <person name="Gubert I.C."/>
            <person name="Chavez-Olortegui C."/>
            <person name="Kalapothakis E."/>
        </authorList>
    </citation>
    <scope>NUCLEOTIDE SEQUENCE [GENOMIC DNA]</scope>
    <source>
        <tissue>Venom gland</tissue>
    </source>
</reference>